<reference key="1">
    <citation type="submission" date="2008-05" db="EMBL/GenBank/DDBJ databases">
        <title>Complete sequence of Rhodopseudomonas palustris TIE-1.</title>
        <authorList>
            <consortium name="US DOE Joint Genome Institute"/>
            <person name="Lucas S."/>
            <person name="Copeland A."/>
            <person name="Lapidus A."/>
            <person name="Glavina del Rio T."/>
            <person name="Dalin E."/>
            <person name="Tice H."/>
            <person name="Pitluck S."/>
            <person name="Chain P."/>
            <person name="Malfatti S."/>
            <person name="Shin M."/>
            <person name="Vergez L."/>
            <person name="Lang D."/>
            <person name="Schmutz J."/>
            <person name="Larimer F."/>
            <person name="Land M."/>
            <person name="Hauser L."/>
            <person name="Kyrpides N."/>
            <person name="Mikhailova N."/>
            <person name="Emerson D."/>
            <person name="Newman D.K."/>
            <person name="Roden E."/>
            <person name="Richardson P."/>
        </authorList>
    </citation>
    <scope>NUCLEOTIDE SEQUENCE [LARGE SCALE GENOMIC DNA]</scope>
    <source>
        <strain>TIE-1</strain>
    </source>
</reference>
<proteinExistence type="inferred from homology"/>
<name>RECR_RHOPT</name>
<evidence type="ECO:0000255" key="1">
    <source>
        <dbReference type="HAMAP-Rule" id="MF_00017"/>
    </source>
</evidence>
<accession>B3QCG7</accession>
<organism>
    <name type="scientific">Rhodopseudomonas palustris (strain TIE-1)</name>
    <dbReference type="NCBI Taxonomy" id="395960"/>
    <lineage>
        <taxon>Bacteria</taxon>
        <taxon>Pseudomonadati</taxon>
        <taxon>Pseudomonadota</taxon>
        <taxon>Alphaproteobacteria</taxon>
        <taxon>Hyphomicrobiales</taxon>
        <taxon>Nitrobacteraceae</taxon>
        <taxon>Rhodopseudomonas</taxon>
    </lineage>
</organism>
<comment type="function">
    <text evidence="1">May play a role in DNA repair. It seems to be involved in an RecBC-independent recombinational process of DNA repair. It may act with RecF and RecO.</text>
</comment>
<comment type="similarity">
    <text evidence="1">Belongs to the RecR family.</text>
</comment>
<sequence>MAGAAGPEIERLIQLLARLPGLGPRSARRAALHLIKKRDALMAPLASALQVAIDKIEVCSTCGNIDSQNPCTVCTDPRRDSSIIVVVADVADLWALERASATNGRYHVLGATLSPLDGVGPEDLTIDALVKRAHDPGVAEIILALNATVDGQTTAHYVTDLLQDANVKVTRLAHGVPVGGELDYLDEGTLSAAMRQRTLF</sequence>
<keyword id="KW-0227">DNA damage</keyword>
<keyword id="KW-0233">DNA recombination</keyword>
<keyword id="KW-0234">DNA repair</keyword>
<keyword id="KW-0479">Metal-binding</keyword>
<keyword id="KW-0862">Zinc</keyword>
<keyword id="KW-0863">Zinc-finger</keyword>
<dbReference type="EMBL" id="CP001096">
    <property type="protein sequence ID" value="ACE99180.1"/>
    <property type="molecule type" value="Genomic_DNA"/>
</dbReference>
<dbReference type="RefSeq" id="WP_011156185.1">
    <property type="nucleotide sequence ID" value="NC_011004.1"/>
</dbReference>
<dbReference type="SMR" id="B3QCG7"/>
<dbReference type="GeneID" id="66891638"/>
<dbReference type="KEGG" id="rpt:Rpal_0621"/>
<dbReference type="HOGENOM" id="CLU_060739_1_1_5"/>
<dbReference type="OrthoDB" id="9802672at2"/>
<dbReference type="Proteomes" id="UP000001725">
    <property type="component" value="Chromosome"/>
</dbReference>
<dbReference type="GO" id="GO:0003677">
    <property type="term" value="F:DNA binding"/>
    <property type="evidence" value="ECO:0007669"/>
    <property type="project" value="UniProtKB-UniRule"/>
</dbReference>
<dbReference type="GO" id="GO:0008270">
    <property type="term" value="F:zinc ion binding"/>
    <property type="evidence" value="ECO:0007669"/>
    <property type="project" value="UniProtKB-KW"/>
</dbReference>
<dbReference type="GO" id="GO:0006310">
    <property type="term" value="P:DNA recombination"/>
    <property type="evidence" value="ECO:0007669"/>
    <property type="project" value="UniProtKB-UniRule"/>
</dbReference>
<dbReference type="GO" id="GO:0006281">
    <property type="term" value="P:DNA repair"/>
    <property type="evidence" value="ECO:0007669"/>
    <property type="project" value="UniProtKB-UniRule"/>
</dbReference>
<dbReference type="CDD" id="cd01025">
    <property type="entry name" value="TOPRIM_recR"/>
    <property type="match status" value="1"/>
</dbReference>
<dbReference type="Gene3D" id="3.40.1360.10">
    <property type="match status" value="1"/>
</dbReference>
<dbReference type="Gene3D" id="6.10.250.240">
    <property type="match status" value="1"/>
</dbReference>
<dbReference type="Gene3D" id="1.10.8.420">
    <property type="entry name" value="RecR Domain 1"/>
    <property type="match status" value="1"/>
</dbReference>
<dbReference type="HAMAP" id="MF_00017">
    <property type="entry name" value="RecR"/>
    <property type="match status" value="1"/>
</dbReference>
<dbReference type="InterPro" id="IPR000093">
    <property type="entry name" value="DNA_Rcmb_RecR"/>
</dbReference>
<dbReference type="InterPro" id="IPR023627">
    <property type="entry name" value="Rcmb_RecR"/>
</dbReference>
<dbReference type="InterPro" id="IPR015967">
    <property type="entry name" value="Rcmb_RecR_Znf"/>
</dbReference>
<dbReference type="InterPro" id="IPR006171">
    <property type="entry name" value="TOPRIM_dom"/>
</dbReference>
<dbReference type="InterPro" id="IPR034137">
    <property type="entry name" value="TOPRIM_RecR"/>
</dbReference>
<dbReference type="NCBIfam" id="TIGR00615">
    <property type="entry name" value="recR"/>
    <property type="match status" value="1"/>
</dbReference>
<dbReference type="PANTHER" id="PTHR30446">
    <property type="entry name" value="RECOMBINATION PROTEIN RECR"/>
    <property type="match status" value="1"/>
</dbReference>
<dbReference type="PANTHER" id="PTHR30446:SF0">
    <property type="entry name" value="RECOMBINATION PROTEIN RECR"/>
    <property type="match status" value="1"/>
</dbReference>
<dbReference type="Pfam" id="PF21175">
    <property type="entry name" value="RecR_C"/>
    <property type="match status" value="1"/>
</dbReference>
<dbReference type="Pfam" id="PF21176">
    <property type="entry name" value="RecR_HhH"/>
    <property type="match status" value="1"/>
</dbReference>
<dbReference type="Pfam" id="PF13662">
    <property type="entry name" value="Toprim_4"/>
    <property type="match status" value="1"/>
</dbReference>
<dbReference type="SMART" id="SM00493">
    <property type="entry name" value="TOPRIM"/>
    <property type="match status" value="1"/>
</dbReference>
<dbReference type="SUPFAM" id="SSF111304">
    <property type="entry name" value="Recombination protein RecR"/>
    <property type="match status" value="1"/>
</dbReference>
<dbReference type="PROSITE" id="PS01300">
    <property type="entry name" value="RECR"/>
    <property type="match status" value="1"/>
</dbReference>
<dbReference type="PROSITE" id="PS50880">
    <property type="entry name" value="TOPRIM"/>
    <property type="match status" value="1"/>
</dbReference>
<protein>
    <recommendedName>
        <fullName evidence="1">Recombination protein RecR</fullName>
    </recommendedName>
</protein>
<feature type="chain" id="PRO_1000089761" description="Recombination protein RecR">
    <location>
        <begin position="1"/>
        <end position="200"/>
    </location>
</feature>
<feature type="domain" description="Toprim" evidence="1">
    <location>
        <begin position="82"/>
        <end position="177"/>
    </location>
</feature>
<feature type="zinc finger region" description="C4-type" evidence="1">
    <location>
        <begin position="59"/>
        <end position="74"/>
    </location>
</feature>
<gene>
    <name evidence="1" type="primary">recR</name>
    <name type="ordered locus">Rpal_0621</name>
</gene>